<feature type="chain" id="PRO_0000169947" description="Citrate synthase">
    <location>
        <begin position="1"/>
        <end position="426"/>
    </location>
</feature>
<feature type="active site" evidence="1">
    <location>
        <position position="314"/>
    </location>
</feature>
<feature type="active site" evidence="1">
    <location>
        <position position="372"/>
    </location>
</feature>
<keyword id="KW-0808">Transferase</keyword>
<keyword id="KW-0816">Tricarboxylic acid cycle</keyword>
<proteinExistence type="inferred from homology"/>
<accession>Q9ZN37</accession>
<protein>
    <recommendedName>
        <fullName>Citrate synthase</fullName>
        <ecNumber>2.3.3.16</ecNumber>
    </recommendedName>
</protein>
<organism>
    <name type="scientific">Helicobacter pylori (strain J99 / ATCC 700824)</name>
    <name type="common">Campylobacter pylori J99</name>
    <dbReference type="NCBI Taxonomy" id="85963"/>
    <lineage>
        <taxon>Bacteria</taxon>
        <taxon>Pseudomonadati</taxon>
        <taxon>Campylobacterota</taxon>
        <taxon>Epsilonproteobacteria</taxon>
        <taxon>Campylobacterales</taxon>
        <taxon>Helicobacteraceae</taxon>
        <taxon>Helicobacter</taxon>
    </lineage>
</organism>
<gene>
    <name type="primary">gltA</name>
    <name type="ordered locus">jhp_0022</name>
</gene>
<name>CISY_HELPJ</name>
<comment type="catalytic activity">
    <reaction evidence="1">
        <text>oxaloacetate + acetyl-CoA + H2O = citrate + CoA + H(+)</text>
        <dbReference type="Rhea" id="RHEA:16845"/>
        <dbReference type="ChEBI" id="CHEBI:15377"/>
        <dbReference type="ChEBI" id="CHEBI:15378"/>
        <dbReference type="ChEBI" id="CHEBI:16452"/>
        <dbReference type="ChEBI" id="CHEBI:16947"/>
        <dbReference type="ChEBI" id="CHEBI:57287"/>
        <dbReference type="ChEBI" id="CHEBI:57288"/>
        <dbReference type="EC" id="2.3.3.16"/>
    </reaction>
</comment>
<comment type="pathway">
    <text>Carbohydrate metabolism; tricarboxylic acid cycle; isocitrate from oxaloacetate: step 1/2.</text>
</comment>
<comment type="miscellaneous">
    <text>Citrate synthase is found in nearly all cells capable of oxidative metabolism.</text>
</comment>
<comment type="similarity">
    <text evidence="2">Belongs to the citrate synthase family.</text>
</comment>
<reference key="1">
    <citation type="journal article" date="1999" name="Nature">
        <title>Genomic sequence comparison of two unrelated isolates of the human gastric pathogen Helicobacter pylori.</title>
        <authorList>
            <person name="Alm R.A."/>
            <person name="Ling L.-S.L."/>
            <person name="Moir D.T."/>
            <person name="King B.L."/>
            <person name="Brown E.D."/>
            <person name="Doig P.C."/>
            <person name="Smith D.R."/>
            <person name="Noonan B."/>
            <person name="Guild B.C."/>
            <person name="deJonge B.L."/>
            <person name="Carmel G."/>
            <person name="Tummino P.J."/>
            <person name="Caruso A."/>
            <person name="Uria-Nickelsen M."/>
            <person name="Mills D.M."/>
            <person name="Ives C."/>
            <person name="Gibson R."/>
            <person name="Merberg D."/>
            <person name="Mills S.D."/>
            <person name="Jiang Q."/>
            <person name="Taylor D.E."/>
            <person name="Vovis G.F."/>
            <person name="Trust T.J."/>
        </authorList>
    </citation>
    <scope>NUCLEOTIDE SEQUENCE [LARGE SCALE GENOMIC DNA]</scope>
    <source>
        <strain>J99 / ATCC 700824</strain>
    </source>
</reference>
<evidence type="ECO:0000255" key="1">
    <source>
        <dbReference type="PROSITE-ProRule" id="PRU10117"/>
    </source>
</evidence>
<evidence type="ECO:0000305" key="2"/>
<sequence length="426" mass="48262">MSVTLINNENNARYEFETIECTRGPKAVDFSKLFETTGFFSYDPGYSSTAGCQSKISYINGKKGELYYRGHRIEDLVAKYKYVDVCRLLLTGELPKNQDESLEFELELRHRSFVHESLLNMFSAFPSNAHPMAKLSSGVSILSTLYSTHQNMHTEEDYQTMARRIVAKIPTLAAICYRNEVGAPIIYPDIARSYVENILFMLRGYPYSRLKHTTQGEVGITPLEVEAFDKILTLHADHGQNASSTTVRNVASTGVHPYAAISAGISALWGHLHGGANEKVLLQLEEIGDVKNVDKYIARVKDKNDNFKLMGFGHRVYKSYDPRAKILKGLKDELHQKGVKMDERLSEIAAKVEEIALKDEYFIERNLYPNVDFYSGTILRALKIPVRFFTPVFVIGRTVGWCAQLLEHVKSPQARITRPRQVYVGD</sequence>
<dbReference type="EC" id="2.3.3.16"/>
<dbReference type="EMBL" id="AE001439">
    <property type="protein sequence ID" value="AAD05606.1"/>
    <property type="molecule type" value="Genomic_DNA"/>
</dbReference>
<dbReference type="PIR" id="D71982">
    <property type="entry name" value="D71982"/>
</dbReference>
<dbReference type="RefSeq" id="WP_000117349.1">
    <property type="nucleotide sequence ID" value="NC_000921.1"/>
</dbReference>
<dbReference type="SMR" id="Q9ZN37"/>
<dbReference type="IntAct" id="Q9ZN37">
    <property type="interactions" value="2"/>
</dbReference>
<dbReference type="KEGG" id="hpj:jhp_0022"/>
<dbReference type="eggNOG" id="COG0372">
    <property type="taxonomic scope" value="Bacteria"/>
</dbReference>
<dbReference type="UniPathway" id="UPA00223">
    <property type="reaction ID" value="UER00717"/>
</dbReference>
<dbReference type="Proteomes" id="UP000000804">
    <property type="component" value="Chromosome"/>
</dbReference>
<dbReference type="GO" id="GO:0005737">
    <property type="term" value="C:cytoplasm"/>
    <property type="evidence" value="ECO:0007669"/>
    <property type="project" value="InterPro"/>
</dbReference>
<dbReference type="GO" id="GO:0004108">
    <property type="term" value="F:citrate (Si)-synthase activity"/>
    <property type="evidence" value="ECO:0007669"/>
    <property type="project" value="InterPro"/>
</dbReference>
<dbReference type="GO" id="GO:0006099">
    <property type="term" value="P:tricarboxylic acid cycle"/>
    <property type="evidence" value="ECO:0007669"/>
    <property type="project" value="UniProtKB-UniPathway"/>
</dbReference>
<dbReference type="CDD" id="cd06114">
    <property type="entry name" value="EcCS_like"/>
    <property type="match status" value="1"/>
</dbReference>
<dbReference type="FunFam" id="1.10.230.10:FF:000002">
    <property type="entry name" value="Citrate synthase"/>
    <property type="match status" value="1"/>
</dbReference>
<dbReference type="Gene3D" id="2.20.28.60">
    <property type="match status" value="1"/>
</dbReference>
<dbReference type="Gene3D" id="1.10.580.10">
    <property type="entry name" value="Citrate Synthase, domain 1"/>
    <property type="match status" value="1"/>
</dbReference>
<dbReference type="Gene3D" id="1.10.230.10">
    <property type="entry name" value="Cytochrome P450-Terp, domain 2"/>
    <property type="match status" value="1"/>
</dbReference>
<dbReference type="InterPro" id="IPR016142">
    <property type="entry name" value="Citrate_synth-like_lrg_a-sub"/>
</dbReference>
<dbReference type="InterPro" id="IPR016143">
    <property type="entry name" value="Citrate_synth-like_sm_a-sub"/>
</dbReference>
<dbReference type="InterPro" id="IPR002020">
    <property type="entry name" value="Citrate_synthase"/>
</dbReference>
<dbReference type="InterPro" id="IPR019810">
    <property type="entry name" value="Citrate_synthase_AS"/>
</dbReference>
<dbReference type="InterPro" id="IPR024176">
    <property type="entry name" value="Citrate_synthase_bac-typ"/>
</dbReference>
<dbReference type="InterPro" id="IPR036969">
    <property type="entry name" value="Citrate_synthase_sf"/>
</dbReference>
<dbReference type="InterPro" id="IPR010953">
    <property type="entry name" value="Citrate_synthase_typ-I"/>
</dbReference>
<dbReference type="NCBIfam" id="NF004126">
    <property type="entry name" value="PRK05614.1"/>
    <property type="match status" value="1"/>
</dbReference>
<dbReference type="PANTHER" id="PTHR42871">
    <property type="entry name" value="CITRATE SYNTHASE"/>
    <property type="match status" value="1"/>
</dbReference>
<dbReference type="PANTHER" id="PTHR42871:SF1">
    <property type="entry name" value="CITRATE SYNTHASE"/>
    <property type="match status" value="1"/>
</dbReference>
<dbReference type="Pfam" id="PF00285">
    <property type="entry name" value="Citrate_synt"/>
    <property type="match status" value="1"/>
</dbReference>
<dbReference type="PIRSF" id="PIRSF001369">
    <property type="entry name" value="Citrate_synth"/>
    <property type="match status" value="1"/>
</dbReference>
<dbReference type="PRINTS" id="PR00143">
    <property type="entry name" value="CITRTSNTHASE"/>
</dbReference>
<dbReference type="SUPFAM" id="SSF48256">
    <property type="entry name" value="Citrate synthase"/>
    <property type="match status" value="1"/>
</dbReference>
<dbReference type="PROSITE" id="PS00480">
    <property type="entry name" value="CITRATE_SYNTHASE"/>
    <property type="match status" value="1"/>
</dbReference>